<gene>
    <name evidence="1" type="primary">rplY</name>
    <name evidence="1" type="synonym">ctc</name>
    <name type="ordered locus">WD_0174</name>
</gene>
<dbReference type="EMBL" id="AE017196">
    <property type="protein sequence ID" value="AAS13923.1"/>
    <property type="molecule type" value="Genomic_DNA"/>
</dbReference>
<dbReference type="RefSeq" id="WP_010962412.1">
    <property type="nucleotide sequence ID" value="NZ_OX384529.1"/>
</dbReference>
<dbReference type="SMR" id="Q73II9"/>
<dbReference type="EnsemblBacteria" id="AAS13923">
    <property type="protein sequence ID" value="AAS13923"/>
    <property type="gene ID" value="WD_0174"/>
</dbReference>
<dbReference type="KEGG" id="wol:WD_0174"/>
<dbReference type="eggNOG" id="COG1825">
    <property type="taxonomic scope" value="Bacteria"/>
</dbReference>
<dbReference type="Proteomes" id="UP000008215">
    <property type="component" value="Chromosome"/>
</dbReference>
<dbReference type="GO" id="GO:0022625">
    <property type="term" value="C:cytosolic large ribosomal subunit"/>
    <property type="evidence" value="ECO:0007669"/>
    <property type="project" value="TreeGrafter"/>
</dbReference>
<dbReference type="GO" id="GO:0008097">
    <property type="term" value="F:5S rRNA binding"/>
    <property type="evidence" value="ECO:0007669"/>
    <property type="project" value="InterPro"/>
</dbReference>
<dbReference type="GO" id="GO:0003735">
    <property type="term" value="F:structural constituent of ribosome"/>
    <property type="evidence" value="ECO:0007669"/>
    <property type="project" value="InterPro"/>
</dbReference>
<dbReference type="GO" id="GO:0006412">
    <property type="term" value="P:translation"/>
    <property type="evidence" value="ECO:0007669"/>
    <property type="project" value="UniProtKB-UniRule"/>
</dbReference>
<dbReference type="CDD" id="cd00495">
    <property type="entry name" value="Ribosomal_L25_TL5_CTC"/>
    <property type="match status" value="1"/>
</dbReference>
<dbReference type="Gene3D" id="2.170.120.20">
    <property type="entry name" value="Ribosomal protein L25, beta domain"/>
    <property type="match status" value="1"/>
</dbReference>
<dbReference type="Gene3D" id="2.40.240.10">
    <property type="entry name" value="Ribosomal Protein L25, Chain P"/>
    <property type="match status" value="1"/>
</dbReference>
<dbReference type="HAMAP" id="MF_01334">
    <property type="entry name" value="Ribosomal_bL25_CTC"/>
    <property type="match status" value="1"/>
</dbReference>
<dbReference type="InterPro" id="IPR020056">
    <property type="entry name" value="Rbsml_bL25/Gln-tRNA_synth_N"/>
</dbReference>
<dbReference type="InterPro" id="IPR011035">
    <property type="entry name" value="Ribosomal_bL25/Gln-tRNA_synth"/>
</dbReference>
<dbReference type="InterPro" id="IPR020057">
    <property type="entry name" value="Ribosomal_bL25_b-dom"/>
</dbReference>
<dbReference type="InterPro" id="IPR037121">
    <property type="entry name" value="Ribosomal_bL25_C"/>
</dbReference>
<dbReference type="InterPro" id="IPR001021">
    <property type="entry name" value="Ribosomal_bL25_long"/>
</dbReference>
<dbReference type="InterPro" id="IPR029751">
    <property type="entry name" value="Ribosomal_L25_dom"/>
</dbReference>
<dbReference type="InterPro" id="IPR020930">
    <property type="entry name" value="Ribosomal_uL5_bac-type"/>
</dbReference>
<dbReference type="NCBIfam" id="TIGR00731">
    <property type="entry name" value="bL25_bact_ctc"/>
    <property type="match status" value="1"/>
</dbReference>
<dbReference type="NCBIfam" id="NF004128">
    <property type="entry name" value="PRK05618.1-2"/>
    <property type="match status" value="1"/>
</dbReference>
<dbReference type="NCBIfam" id="NF004138">
    <property type="entry name" value="PRK05618.4-1"/>
    <property type="match status" value="1"/>
</dbReference>
<dbReference type="PANTHER" id="PTHR33284">
    <property type="entry name" value="RIBOSOMAL PROTEIN L25/GLN-TRNA SYNTHETASE, ANTI-CODON-BINDING DOMAIN-CONTAINING PROTEIN"/>
    <property type="match status" value="1"/>
</dbReference>
<dbReference type="PANTHER" id="PTHR33284:SF1">
    <property type="entry name" value="RIBOSOMAL PROTEIN L25_GLN-TRNA SYNTHETASE, ANTI-CODON-BINDING DOMAIN-CONTAINING PROTEIN"/>
    <property type="match status" value="1"/>
</dbReference>
<dbReference type="Pfam" id="PF01386">
    <property type="entry name" value="Ribosomal_L25p"/>
    <property type="match status" value="1"/>
</dbReference>
<dbReference type="Pfam" id="PF14693">
    <property type="entry name" value="Ribosomal_TL5_C"/>
    <property type="match status" value="1"/>
</dbReference>
<dbReference type="SUPFAM" id="SSF50715">
    <property type="entry name" value="Ribosomal protein L25-like"/>
    <property type="match status" value="1"/>
</dbReference>
<name>RL25_WOLPM</name>
<keyword id="KW-0687">Ribonucleoprotein</keyword>
<keyword id="KW-0689">Ribosomal protein</keyword>
<keyword id="KW-0694">RNA-binding</keyword>
<keyword id="KW-0699">rRNA-binding</keyword>
<proteinExistence type="inferred from homology"/>
<comment type="function">
    <text evidence="1">This is one of the proteins that binds to the 5S RNA in the ribosome where it forms part of the central protuberance.</text>
</comment>
<comment type="subunit">
    <text evidence="1">Part of the 50S ribosomal subunit; part of the 5S rRNA/L5/L18/L25 subcomplex. Contacts the 5S rRNA. Binds to the 5S rRNA independently of L5 and L18.</text>
</comment>
<comment type="similarity">
    <text evidence="1">Belongs to the bacterial ribosomal protein bL25 family. CTC subfamily.</text>
</comment>
<feature type="chain" id="PRO_0000181615" description="Large ribosomal subunit protein bL25">
    <location>
        <begin position="1"/>
        <end position="203"/>
    </location>
</feature>
<protein>
    <recommendedName>
        <fullName evidence="1">Large ribosomal subunit protein bL25</fullName>
    </recommendedName>
    <alternativeName>
        <fullName evidence="2">50S ribosomal protein L25</fullName>
    </alternativeName>
    <alternativeName>
        <fullName evidence="1">General stress protein CTC</fullName>
    </alternativeName>
</protein>
<accession>Q73II9</accession>
<sequence length="203" mass="22373">MTQQEIVTINAELRDITKTKAMHSLRKKGNIPGIIYGKGHDNVNLTLSAKEFTKQYKSGSLSAHLIELNISGKKEYALVRDIQLHVVKDTVQHVDFQFVDKGSEIKIDIPLSFVNESKAPGIKLGGVLNVLCRSIAVKCSPDKIPQVIEVDLSGKMIGQSIHINDVKLPEGVKFVAHEEENFTIVTISAADSDVEEPQAETEE</sequence>
<evidence type="ECO:0000255" key="1">
    <source>
        <dbReference type="HAMAP-Rule" id="MF_01334"/>
    </source>
</evidence>
<evidence type="ECO:0000305" key="2"/>
<reference key="1">
    <citation type="journal article" date="2004" name="PLoS Biol.">
        <title>Phylogenomics of the reproductive parasite Wolbachia pipientis wMel: a streamlined genome overrun by mobile genetic elements.</title>
        <authorList>
            <person name="Wu M."/>
            <person name="Sun L.V."/>
            <person name="Vamathevan J.J."/>
            <person name="Riegler M."/>
            <person name="DeBoy R.T."/>
            <person name="Brownlie J.C."/>
            <person name="McGraw E.A."/>
            <person name="Martin W."/>
            <person name="Esser C."/>
            <person name="Ahmadinejad N."/>
            <person name="Wiegand C."/>
            <person name="Madupu R."/>
            <person name="Beanan M.J."/>
            <person name="Brinkac L.M."/>
            <person name="Daugherty S.C."/>
            <person name="Durkin A.S."/>
            <person name="Kolonay J.F."/>
            <person name="Nelson W.C."/>
            <person name="Mohamoud Y."/>
            <person name="Lee P."/>
            <person name="Berry K.J."/>
            <person name="Young M.B."/>
            <person name="Utterback T.R."/>
            <person name="Weidman J.F."/>
            <person name="Nierman W.C."/>
            <person name="Paulsen I.T."/>
            <person name="Nelson K.E."/>
            <person name="Tettelin H."/>
            <person name="O'Neill S.L."/>
            <person name="Eisen J.A."/>
        </authorList>
    </citation>
    <scope>NUCLEOTIDE SEQUENCE [LARGE SCALE GENOMIC DNA]</scope>
</reference>
<organism>
    <name type="scientific">Wolbachia pipientis wMel</name>
    <dbReference type="NCBI Taxonomy" id="163164"/>
    <lineage>
        <taxon>Bacteria</taxon>
        <taxon>Pseudomonadati</taxon>
        <taxon>Pseudomonadota</taxon>
        <taxon>Alphaproteobacteria</taxon>
        <taxon>Rickettsiales</taxon>
        <taxon>Anaplasmataceae</taxon>
        <taxon>Wolbachieae</taxon>
        <taxon>Wolbachia</taxon>
    </lineage>
</organism>